<protein>
    <recommendedName>
        <fullName>mRNA degradation protein pet127, mitochondrial</fullName>
    </recommendedName>
</protein>
<organism>
    <name type="scientific">Schizosaccharomyces pombe (strain 972 / ATCC 24843)</name>
    <name type="common">Fission yeast</name>
    <dbReference type="NCBI Taxonomy" id="284812"/>
    <lineage>
        <taxon>Eukaryota</taxon>
        <taxon>Fungi</taxon>
        <taxon>Dikarya</taxon>
        <taxon>Ascomycota</taxon>
        <taxon>Taphrinomycotina</taxon>
        <taxon>Schizosaccharomycetes</taxon>
        <taxon>Schizosaccharomycetales</taxon>
        <taxon>Schizosaccharomycetaceae</taxon>
        <taxon>Schizosaccharomyces</taxon>
    </lineage>
</organism>
<gene>
    <name type="primary">pet127</name>
    <name type="ORF">SPCC1183.04c</name>
</gene>
<name>PT127_SCHPO</name>
<feature type="transit peptide" description="Mitochondrion" evidence="1">
    <location>
        <begin position="1"/>
        <end position="12"/>
    </location>
</feature>
<feature type="chain" id="PRO_0000352804" description="mRNA degradation protein pet127, mitochondrial">
    <location>
        <begin position="13"/>
        <end position="524"/>
    </location>
</feature>
<keyword id="KW-0496">Mitochondrion</keyword>
<keyword id="KW-1185">Reference proteome</keyword>
<keyword id="KW-0809">Transit peptide</keyword>
<comment type="function">
    <text evidence="3">Required for the degradation of mRNA in mitochondria.</text>
</comment>
<comment type="subcellular location">
    <subcellularLocation>
        <location evidence="2">Mitochondrion</location>
    </subcellularLocation>
</comment>
<comment type="similarity">
    <text evidence="4">Belongs to the PET127 family.</text>
</comment>
<accession>O74832</accession>
<sequence>MLIYKKKNFGRRSVYNLKKCLHKGFQINSCNIKAADNVLHSKASAFEKVNVVDKESIGNLQHHLDTVLPKKKFQFLRDPKTNDYKWDEYLSKILPVDKFNFGLLSKFRPPSEDEQLQKVANSIGAEFVGSTSSLTGLMSQLHFFISKWKFPNFSDLSKGFYISPNERNFTRLCRSASSVHISYQNGLYCIDKDKSLTKEPSVNIILMNVGKSLETFFTVDKDQFLLYKKPPSSNGVLKPLKDVFQYGRCSSLLVRSQLDCYDKKIPESGVFDLKTRAVFGVRMNQTQPELFKSYKLTHYYGNRISFEREYFDLIRSAFMKYSLQARLGYMQGVFVAYHNTSDIFGFQYIPLVAMDRAIHGSSEIGEAEFNLNLQLLEKILQYATSIFPKRSFRVMLSTTEDVPNPPLKVYLEVADDKENRGFDLLDGQKNLEAKTVSPSNFCALEVCALQFVNGVHKSVVKHLDEKETWSIKYHFRKPRDQDNLLRNYIRLRDDIKRRESKISNPPESLLHDYYACSEQYYKRN</sequence>
<proteinExistence type="inferred from homology"/>
<reference key="1">
    <citation type="journal article" date="2002" name="Nature">
        <title>The genome sequence of Schizosaccharomyces pombe.</title>
        <authorList>
            <person name="Wood V."/>
            <person name="Gwilliam R."/>
            <person name="Rajandream M.A."/>
            <person name="Lyne M.H."/>
            <person name="Lyne R."/>
            <person name="Stewart A."/>
            <person name="Sgouros J.G."/>
            <person name="Peat N."/>
            <person name="Hayles J."/>
            <person name="Baker S.G."/>
            <person name="Basham D."/>
            <person name="Bowman S."/>
            <person name="Brooks K."/>
            <person name="Brown D."/>
            <person name="Brown S."/>
            <person name="Chillingworth T."/>
            <person name="Churcher C.M."/>
            <person name="Collins M."/>
            <person name="Connor R."/>
            <person name="Cronin A."/>
            <person name="Davis P."/>
            <person name="Feltwell T."/>
            <person name="Fraser A."/>
            <person name="Gentles S."/>
            <person name="Goble A."/>
            <person name="Hamlin N."/>
            <person name="Harris D.E."/>
            <person name="Hidalgo J."/>
            <person name="Hodgson G."/>
            <person name="Holroyd S."/>
            <person name="Hornsby T."/>
            <person name="Howarth S."/>
            <person name="Huckle E.J."/>
            <person name="Hunt S."/>
            <person name="Jagels K."/>
            <person name="James K.D."/>
            <person name="Jones L."/>
            <person name="Jones M."/>
            <person name="Leather S."/>
            <person name="McDonald S."/>
            <person name="McLean J."/>
            <person name="Mooney P."/>
            <person name="Moule S."/>
            <person name="Mungall K.L."/>
            <person name="Murphy L.D."/>
            <person name="Niblett D."/>
            <person name="Odell C."/>
            <person name="Oliver K."/>
            <person name="O'Neil S."/>
            <person name="Pearson D."/>
            <person name="Quail M.A."/>
            <person name="Rabbinowitsch E."/>
            <person name="Rutherford K.M."/>
            <person name="Rutter S."/>
            <person name="Saunders D."/>
            <person name="Seeger K."/>
            <person name="Sharp S."/>
            <person name="Skelton J."/>
            <person name="Simmonds M.N."/>
            <person name="Squares R."/>
            <person name="Squares S."/>
            <person name="Stevens K."/>
            <person name="Taylor K."/>
            <person name="Taylor R.G."/>
            <person name="Tivey A."/>
            <person name="Walsh S.V."/>
            <person name="Warren T."/>
            <person name="Whitehead S."/>
            <person name="Woodward J.R."/>
            <person name="Volckaert G."/>
            <person name="Aert R."/>
            <person name="Robben J."/>
            <person name="Grymonprez B."/>
            <person name="Weltjens I."/>
            <person name="Vanstreels E."/>
            <person name="Rieger M."/>
            <person name="Schaefer M."/>
            <person name="Mueller-Auer S."/>
            <person name="Gabel C."/>
            <person name="Fuchs M."/>
            <person name="Duesterhoeft A."/>
            <person name="Fritzc C."/>
            <person name="Holzer E."/>
            <person name="Moestl D."/>
            <person name="Hilbert H."/>
            <person name="Borzym K."/>
            <person name="Langer I."/>
            <person name="Beck A."/>
            <person name="Lehrach H."/>
            <person name="Reinhardt R."/>
            <person name="Pohl T.M."/>
            <person name="Eger P."/>
            <person name="Zimmermann W."/>
            <person name="Wedler H."/>
            <person name="Wambutt R."/>
            <person name="Purnelle B."/>
            <person name="Goffeau A."/>
            <person name="Cadieu E."/>
            <person name="Dreano S."/>
            <person name="Gloux S."/>
            <person name="Lelaure V."/>
            <person name="Mottier S."/>
            <person name="Galibert F."/>
            <person name="Aves S.J."/>
            <person name="Xiang Z."/>
            <person name="Hunt C."/>
            <person name="Moore K."/>
            <person name="Hurst S.M."/>
            <person name="Lucas M."/>
            <person name="Rochet M."/>
            <person name="Gaillardin C."/>
            <person name="Tallada V.A."/>
            <person name="Garzon A."/>
            <person name="Thode G."/>
            <person name="Daga R.R."/>
            <person name="Cruzado L."/>
            <person name="Jimenez J."/>
            <person name="Sanchez M."/>
            <person name="del Rey F."/>
            <person name="Benito J."/>
            <person name="Dominguez A."/>
            <person name="Revuelta J.L."/>
            <person name="Moreno S."/>
            <person name="Armstrong J."/>
            <person name="Forsburg S.L."/>
            <person name="Cerutti L."/>
            <person name="Lowe T."/>
            <person name="McCombie W.R."/>
            <person name="Paulsen I."/>
            <person name="Potashkin J."/>
            <person name="Shpakovski G.V."/>
            <person name="Ussery D."/>
            <person name="Barrell B.G."/>
            <person name="Nurse P."/>
        </authorList>
    </citation>
    <scope>NUCLEOTIDE SEQUENCE [LARGE SCALE GENOMIC DNA]</scope>
    <source>
        <strain>972 / ATCC 24843</strain>
    </source>
</reference>
<reference key="2">
    <citation type="journal article" date="2006" name="Nat. Biotechnol.">
        <title>ORFeome cloning and global analysis of protein localization in the fission yeast Schizosaccharomyces pombe.</title>
        <authorList>
            <person name="Matsuyama A."/>
            <person name="Arai R."/>
            <person name="Yashiroda Y."/>
            <person name="Shirai A."/>
            <person name="Kamata A."/>
            <person name="Sekido S."/>
            <person name="Kobayashi Y."/>
            <person name="Hashimoto A."/>
            <person name="Hamamoto M."/>
            <person name="Hiraoka Y."/>
            <person name="Horinouchi S."/>
            <person name="Yoshida M."/>
        </authorList>
    </citation>
    <scope>SUBCELLULAR LOCATION [LARGE SCALE ANALYSIS]</scope>
</reference>
<reference key="3">
    <citation type="journal article" date="2007" name="J. Mol. Biol.">
        <title>RNA degradation in fission yeast mitochondria is stimulated by a member of a new family of proteins that are conserved in lower eukaryotes.</title>
        <authorList>
            <person name="Wiesenberger G."/>
            <person name="Speer F."/>
            <person name="Haller G."/>
            <person name="Bonnefoy N."/>
            <person name="Schleiffer A."/>
            <person name="Schafer B."/>
        </authorList>
    </citation>
    <scope>FUNCTION</scope>
</reference>
<dbReference type="EMBL" id="CU329672">
    <property type="protein sequence ID" value="CAA21084.1"/>
    <property type="molecule type" value="Genomic_DNA"/>
</dbReference>
<dbReference type="PIR" id="T40844">
    <property type="entry name" value="T40844"/>
</dbReference>
<dbReference type="RefSeq" id="NP_587887.1">
    <property type="nucleotide sequence ID" value="NM_001022879.2"/>
</dbReference>
<dbReference type="BioGRID" id="275594">
    <property type="interactions" value="2"/>
</dbReference>
<dbReference type="FunCoup" id="O74832">
    <property type="interactions" value="192"/>
</dbReference>
<dbReference type="STRING" id="284812.O74832"/>
<dbReference type="iPTMnet" id="O74832"/>
<dbReference type="PaxDb" id="4896-SPCC1183.04c.1"/>
<dbReference type="EnsemblFungi" id="SPCC1183.04c.1">
    <property type="protein sequence ID" value="SPCC1183.04c.1:pep"/>
    <property type="gene ID" value="SPCC1183.04c"/>
</dbReference>
<dbReference type="GeneID" id="2539021"/>
<dbReference type="KEGG" id="spo:2539021"/>
<dbReference type="PomBase" id="SPCC1183.04c">
    <property type="gene designation" value="pet127"/>
</dbReference>
<dbReference type="VEuPathDB" id="FungiDB:SPCC1183.04c"/>
<dbReference type="eggNOG" id="ENOG502QPU6">
    <property type="taxonomic scope" value="Eukaryota"/>
</dbReference>
<dbReference type="HOGENOM" id="CLU_003477_2_2_1"/>
<dbReference type="InParanoid" id="O74832"/>
<dbReference type="OMA" id="AYHNTCQ"/>
<dbReference type="PhylomeDB" id="O74832"/>
<dbReference type="PRO" id="PR:O74832"/>
<dbReference type="Proteomes" id="UP000002485">
    <property type="component" value="Chromosome III"/>
</dbReference>
<dbReference type="GO" id="GO:0005740">
    <property type="term" value="C:mitochondrial envelope"/>
    <property type="evidence" value="ECO:0000316"/>
    <property type="project" value="PomBase"/>
</dbReference>
<dbReference type="GO" id="GO:0005759">
    <property type="term" value="C:mitochondrial matrix"/>
    <property type="evidence" value="ECO:0000266"/>
    <property type="project" value="PomBase"/>
</dbReference>
<dbReference type="GO" id="GO:0005739">
    <property type="term" value="C:mitochondrion"/>
    <property type="evidence" value="ECO:0007005"/>
    <property type="project" value="PomBase"/>
</dbReference>
<dbReference type="GO" id="GO:0000964">
    <property type="term" value="P:mitochondrial RNA 5'-end processing"/>
    <property type="evidence" value="ECO:0000318"/>
    <property type="project" value="GO_Central"/>
</dbReference>
<dbReference type="GO" id="GO:0000957">
    <property type="term" value="P:mitochondrial RNA catabolic process"/>
    <property type="evidence" value="ECO:0000315"/>
    <property type="project" value="PomBase"/>
</dbReference>
<dbReference type="InterPro" id="IPR013943">
    <property type="entry name" value="Pet127"/>
</dbReference>
<dbReference type="PANTHER" id="PTHR31014">
    <property type="entry name" value="MITOCHONDRIAL TRANSLATION SYSTEM COMPONENT PET127-RELATED"/>
    <property type="match status" value="1"/>
</dbReference>
<dbReference type="PANTHER" id="PTHR31014:SF0">
    <property type="entry name" value="MITOCHONDRIAL TRANSLATION SYSTEM COMPONENT PET127-RELATED"/>
    <property type="match status" value="1"/>
</dbReference>
<dbReference type="Pfam" id="PF08634">
    <property type="entry name" value="Pet127"/>
    <property type="match status" value="1"/>
</dbReference>
<evidence type="ECO:0000255" key="1"/>
<evidence type="ECO:0000269" key="2">
    <source>
    </source>
</evidence>
<evidence type="ECO:0000269" key="3">
    <source>
    </source>
</evidence>
<evidence type="ECO:0000305" key="4"/>